<proteinExistence type="evidence at transcript level"/>
<name>EF1GB_XENLA</name>
<accession>Q91375</accession>
<organism>
    <name type="scientific">Xenopus laevis</name>
    <name type="common">African clawed frog</name>
    <dbReference type="NCBI Taxonomy" id="8355"/>
    <lineage>
        <taxon>Eukaryota</taxon>
        <taxon>Metazoa</taxon>
        <taxon>Chordata</taxon>
        <taxon>Craniata</taxon>
        <taxon>Vertebrata</taxon>
        <taxon>Euteleostomi</taxon>
        <taxon>Amphibia</taxon>
        <taxon>Batrachia</taxon>
        <taxon>Anura</taxon>
        <taxon>Pipoidea</taxon>
        <taxon>Pipidae</taxon>
        <taxon>Xenopodinae</taxon>
        <taxon>Xenopus</taxon>
        <taxon>Xenopus</taxon>
    </lineage>
</organism>
<feature type="chain" id="PRO_0000208821" description="Elongation factor 1-gamma-B">
    <location>
        <begin position="1"/>
        <end position="437"/>
    </location>
</feature>
<feature type="domain" description="GST N-terminal">
    <location>
        <begin position="2"/>
        <end position="87"/>
    </location>
</feature>
<feature type="domain" description="GST C-terminal">
    <location>
        <begin position="89"/>
        <end position="222"/>
    </location>
</feature>
<feature type="domain" description="EF-1-gamma C-terminal" evidence="1">
    <location>
        <begin position="276"/>
        <end position="437"/>
    </location>
</feature>
<feature type="region of interest" description="Disordered" evidence="2">
    <location>
        <begin position="225"/>
        <end position="279"/>
    </location>
</feature>
<feature type="compositionally biased region" description="Basic and acidic residues" evidence="2">
    <location>
        <begin position="225"/>
        <end position="240"/>
    </location>
</feature>
<feature type="compositionally biased region" description="Basic residues" evidence="2">
    <location>
        <begin position="241"/>
        <end position="251"/>
    </location>
</feature>
<feature type="compositionally biased region" description="Basic and acidic residues" evidence="2">
    <location>
        <begin position="266"/>
        <end position="279"/>
    </location>
</feature>
<dbReference type="EMBL" id="S69726">
    <property type="protein sequence ID" value="AAB29958.1"/>
    <property type="molecule type" value="mRNA"/>
</dbReference>
<dbReference type="PIR" id="I51238">
    <property type="entry name" value="I51238"/>
</dbReference>
<dbReference type="RefSeq" id="NP_001081481.1">
    <property type="nucleotide sequence ID" value="NM_001088012.1"/>
</dbReference>
<dbReference type="SMR" id="Q91375"/>
<dbReference type="IntAct" id="Q91375">
    <property type="interactions" value="1"/>
</dbReference>
<dbReference type="GeneID" id="397861"/>
<dbReference type="KEGG" id="xla:397861"/>
<dbReference type="AGR" id="Xenbase:XB-GENE-6252331"/>
<dbReference type="CTD" id="397861"/>
<dbReference type="Xenbase" id="XB-GENE-6252331">
    <property type="gene designation" value="eef1g.S"/>
</dbReference>
<dbReference type="OrthoDB" id="249703at2759"/>
<dbReference type="Proteomes" id="UP000186698">
    <property type="component" value="Chromosome 4S"/>
</dbReference>
<dbReference type="Bgee" id="397861">
    <property type="expression patterns" value="Expressed in pancreas and 19 other cell types or tissues"/>
</dbReference>
<dbReference type="GO" id="GO:0005737">
    <property type="term" value="C:cytoplasm"/>
    <property type="evidence" value="ECO:0000318"/>
    <property type="project" value="GO_Central"/>
</dbReference>
<dbReference type="GO" id="GO:0005634">
    <property type="term" value="C:nucleus"/>
    <property type="evidence" value="ECO:0000318"/>
    <property type="project" value="GO_Central"/>
</dbReference>
<dbReference type="GO" id="GO:0003746">
    <property type="term" value="F:translation elongation factor activity"/>
    <property type="evidence" value="ECO:0007669"/>
    <property type="project" value="UniProtKB-KW"/>
</dbReference>
<dbReference type="GO" id="GO:0006414">
    <property type="term" value="P:translational elongation"/>
    <property type="evidence" value="ECO:0000318"/>
    <property type="project" value="GO_Central"/>
</dbReference>
<dbReference type="CDD" id="cd03181">
    <property type="entry name" value="GST_C_EF1Bgamma_like"/>
    <property type="match status" value="1"/>
</dbReference>
<dbReference type="CDD" id="cd03044">
    <property type="entry name" value="GST_N_EF1Bgamma"/>
    <property type="match status" value="1"/>
</dbReference>
<dbReference type="FunFam" id="1.20.1050.10:FF:000021">
    <property type="entry name" value="Elongation factor 1-gamma"/>
    <property type="match status" value="1"/>
</dbReference>
<dbReference type="FunFam" id="3.40.30.10:FF:000088">
    <property type="entry name" value="Elongation factor 1-gamma"/>
    <property type="match status" value="1"/>
</dbReference>
<dbReference type="FunFam" id="3.30.70.1010:FF:000001">
    <property type="entry name" value="Elongation factor 1-gamma 1"/>
    <property type="match status" value="1"/>
</dbReference>
<dbReference type="Gene3D" id="1.20.1050.10">
    <property type="match status" value="1"/>
</dbReference>
<dbReference type="Gene3D" id="3.40.30.10">
    <property type="entry name" value="Glutaredoxin"/>
    <property type="match status" value="1"/>
</dbReference>
<dbReference type="Gene3D" id="3.30.70.1010">
    <property type="entry name" value="Translation elongation factor EF1B, gamma chain, conserved domain"/>
    <property type="match status" value="1"/>
</dbReference>
<dbReference type="InterPro" id="IPR050802">
    <property type="entry name" value="EF-GSTs"/>
</dbReference>
<dbReference type="InterPro" id="IPR001662">
    <property type="entry name" value="EF1B_G_C"/>
</dbReference>
<dbReference type="InterPro" id="IPR036433">
    <property type="entry name" value="EF1B_G_C_sf"/>
</dbReference>
<dbReference type="InterPro" id="IPR010987">
    <property type="entry name" value="Glutathione-S-Trfase_C-like"/>
</dbReference>
<dbReference type="InterPro" id="IPR036282">
    <property type="entry name" value="Glutathione-S-Trfase_C_sf"/>
</dbReference>
<dbReference type="InterPro" id="IPR040079">
    <property type="entry name" value="Glutathione_S-Trfase"/>
</dbReference>
<dbReference type="InterPro" id="IPR004045">
    <property type="entry name" value="Glutathione_S-Trfase_N"/>
</dbReference>
<dbReference type="InterPro" id="IPR004046">
    <property type="entry name" value="GST_C"/>
</dbReference>
<dbReference type="InterPro" id="IPR036249">
    <property type="entry name" value="Thioredoxin-like_sf"/>
</dbReference>
<dbReference type="PANTHER" id="PTHR43986">
    <property type="entry name" value="ELONGATION FACTOR 1-GAMMA"/>
    <property type="match status" value="1"/>
</dbReference>
<dbReference type="PANTHER" id="PTHR43986:SF1">
    <property type="entry name" value="ELONGATION FACTOR 1-GAMMA"/>
    <property type="match status" value="1"/>
</dbReference>
<dbReference type="Pfam" id="PF00647">
    <property type="entry name" value="EF1G"/>
    <property type="match status" value="1"/>
</dbReference>
<dbReference type="Pfam" id="PF00043">
    <property type="entry name" value="GST_C"/>
    <property type="match status" value="1"/>
</dbReference>
<dbReference type="Pfam" id="PF02798">
    <property type="entry name" value="GST_N"/>
    <property type="match status" value="1"/>
</dbReference>
<dbReference type="SFLD" id="SFLDS00019">
    <property type="entry name" value="Glutathione_Transferase_(cytos"/>
    <property type="match status" value="1"/>
</dbReference>
<dbReference type="SFLD" id="SFLDG00358">
    <property type="entry name" value="Main_(cytGST)"/>
    <property type="match status" value="1"/>
</dbReference>
<dbReference type="SMART" id="SM01183">
    <property type="entry name" value="EF1G"/>
    <property type="match status" value="1"/>
</dbReference>
<dbReference type="SUPFAM" id="SSF89942">
    <property type="entry name" value="eEF1-gamma domain"/>
    <property type="match status" value="1"/>
</dbReference>
<dbReference type="SUPFAM" id="SSF47616">
    <property type="entry name" value="GST C-terminal domain-like"/>
    <property type="match status" value="1"/>
</dbReference>
<dbReference type="SUPFAM" id="SSF52833">
    <property type="entry name" value="Thioredoxin-like"/>
    <property type="match status" value="1"/>
</dbReference>
<dbReference type="PROSITE" id="PS50040">
    <property type="entry name" value="EF1G_C"/>
    <property type="match status" value="1"/>
</dbReference>
<dbReference type="PROSITE" id="PS50405">
    <property type="entry name" value="GST_CTER"/>
    <property type="match status" value="1"/>
</dbReference>
<dbReference type="PROSITE" id="PS50404">
    <property type="entry name" value="GST_NTER"/>
    <property type="match status" value="1"/>
</dbReference>
<reference key="1">
    <citation type="journal article" date="1993" name="Dev. Genet.">
        <title>Expression of elongation factor 1 alpha (EF-1 alpha) and 1 beta gamma (EF-1 beta gamma) are uncoupled in early Xenopus embryos.</title>
        <authorList>
            <person name="Morales J."/>
            <person name="Bassez T."/>
            <person name="Cormier P."/>
            <person name="Mulner-Lorillon O."/>
            <person name="Belle R."/>
            <person name="Osborne H.B."/>
        </authorList>
    </citation>
    <scope>NUCLEOTIDE SEQUENCE [MRNA]</scope>
    <source>
        <tissue>Oocyte</tissue>
    </source>
</reference>
<keyword id="KW-0251">Elongation factor</keyword>
<keyword id="KW-0648">Protein biosynthesis</keyword>
<keyword id="KW-1185">Reference proteome</keyword>
<comment type="function">
    <text>Probably plays a role in anchoring the complex to other cellular components.</text>
</comment>
<comment type="subunit">
    <text>EF-1 is composed of four subunits: alpha, beta, delta, and gamma.</text>
</comment>
<evidence type="ECO:0000255" key="1">
    <source>
        <dbReference type="PROSITE-ProRule" id="PRU00519"/>
    </source>
</evidence>
<evidence type="ECO:0000256" key="2">
    <source>
        <dbReference type="SAM" id="MobiDB-lite"/>
    </source>
</evidence>
<gene>
    <name type="primary">eef1g-b</name>
</gene>
<protein>
    <recommendedName>
        <fullName>Elongation factor 1-gamma-B</fullName>
        <shortName>EF-1-gamma-B</shortName>
    </recommendedName>
    <alternativeName>
        <fullName>eEF-1B gamma-B</fullName>
    </alternativeName>
    <alternativeName>
        <fullName>p47</fullName>
    </alternativeName>
</protein>
<sequence>MAGGTLYTYPDNWRAYKPLIAAQYSRFPIKVASSPPEFQFGLTNKTPEFLKKFPLGKVPAFEGNNGFCLFESSAIAHYVANDELRGSNNRLHQAQVIQWVGFSDSHVVPPASAWVFPTLGIMQFNKQATEQAKEEIKTVLGVLDCHLQTRTFLVGERITLADITLTCSLLWLYKQVLEPSFRQPYGNVTRWFVTCVNQPEFRAVLGEVKLCDKMAQFDAKKFAEVQPKKETPKKEKPAKEPKKKKKKKKKATPAPAPAPEDDLDESEKALAAEPKSKDPYAHLPKSSFIMDEFKRKYSNEDTLTVALPYFWEHFEKEGWSIWYAEYKFPEELTQTFMSCNLITGMFQRLDKLRKTAFASVILFGTNNNSTISGVWVFRGHDLAFTLSEDWQIDYESYTWRKLESDSEECRTMVKEYFAWEGEFKHVGKAFNQGKIFK</sequence>